<reference key="1">
    <citation type="journal article" date="2003" name="Biochem. Biophys. Res. Commun.">
        <title>Molecular characterization of Trimeresurus stejnegeri venom L-amino acid oxidase with potential anti-HIV activity.</title>
        <authorList>
            <person name="Zhang Y.-J."/>
            <person name="Wang J.-H."/>
            <person name="Lee W.-H."/>
            <person name="Wang Q."/>
            <person name="Liu H."/>
            <person name="Zheng Y.-T."/>
            <person name="Zhang Y."/>
        </authorList>
    </citation>
    <scope>NUCLEOTIDE SEQUENCE [MRNA]</scope>
    <scope>SUBUNIT</scope>
    <scope>GLYCOSYLATION</scope>
    <scope>IDENTIFICATION BY MASS SPECTROMETRY</scope>
    <scope>SUBCELLULAR LOCATION</scope>
    <source>
        <tissue>Venom</tissue>
        <tissue>Venom gland</tissue>
    </source>
</reference>
<reference key="2">
    <citation type="submission" date="2003-07" db="EMBL/GenBank/DDBJ databases">
        <title>Purification, cloning and characterization of the L-amino acid oxidase in snake Trimeresurus stejnegeri.</title>
        <authorList>
            <person name="Wang J."/>
            <person name="Huang Q."/>
            <person name="Teng M."/>
            <person name="Niu L."/>
        </authorList>
    </citation>
    <scope>NUCLEOTIDE SEQUENCE [MRNA]</scope>
    <source>
        <tissue>Venom gland</tissue>
    </source>
</reference>
<dbReference type="EC" id="1.4.3.2" evidence="3"/>
<dbReference type="EMBL" id="AY277739">
    <property type="protein sequence ID" value="AAQ56232.1"/>
    <property type="molecule type" value="mRNA"/>
</dbReference>
<dbReference type="EMBL" id="AY338966">
    <property type="protein sequence ID" value="AAQ16182.1"/>
    <property type="molecule type" value="mRNA"/>
</dbReference>
<dbReference type="SMR" id="Q6WP39"/>
<dbReference type="BRENDA" id="1.4.3.2">
    <property type="organism ID" value="7401"/>
</dbReference>
<dbReference type="GO" id="GO:0005576">
    <property type="term" value="C:extracellular region"/>
    <property type="evidence" value="ECO:0007669"/>
    <property type="project" value="UniProtKB-SubCell"/>
</dbReference>
<dbReference type="GO" id="GO:0001716">
    <property type="term" value="F:L-amino-acid oxidase activity"/>
    <property type="evidence" value="ECO:0007669"/>
    <property type="project" value="UniProtKB-EC"/>
</dbReference>
<dbReference type="GO" id="GO:0090729">
    <property type="term" value="F:toxin activity"/>
    <property type="evidence" value="ECO:0007669"/>
    <property type="project" value="UniProtKB-KW"/>
</dbReference>
<dbReference type="GO" id="GO:0009063">
    <property type="term" value="P:amino acid catabolic process"/>
    <property type="evidence" value="ECO:0007669"/>
    <property type="project" value="TreeGrafter"/>
</dbReference>
<dbReference type="GO" id="GO:0006915">
    <property type="term" value="P:apoptotic process"/>
    <property type="evidence" value="ECO:0007669"/>
    <property type="project" value="UniProtKB-KW"/>
</dbReference>
<dbReference type="GO" id="GO:0042742">
    <property type="term" value="P:defense response to bacterium"/>
    <property type="evidence" value="ECO:0007669"/>
    <property type="project" value="UniProtKB-KW"/>
</dbReference>
<dbReference type="GO" id="GO:0031640">
    <property type="term" value="P:killing of cells of another organism"/>
    <property type="evidence" value="ECO:0007669"/>
    <property type="project" value="UniProtKB-KW"/>
</dbReference>
<dbReference type="FunFam" id="1.10.405.10:FF:000004">
    <property type="entry name" value="Amine oxidase"/>
    <property type="match status" value="1"/>
</dbReference>
<dbReference type="FunFam" id="3.50.50.60:FF:000450">
    <property type="entry name" value="Amine oxidase"/>
    <property type="match status" value="1"/>
</dbReference>
<dbReference type="Gene3D" id="3.90.660.10">
    <property type="match status" value="2"/>
</dbReference>
<dbReference type="Gene3D" id="3.50.50.60">
    <property type="entry name" value="FAD/NAD(P)-binding domain"/>
    <property type="match status" value="1"/>
</dbReference>
<dbReference type="Gene3D" id="1.10.405.10">
    <property type="entry name" value="Guanine Nucleotide Dissociation Inhibitor, domain 1"/>
    <property type="match status" value="1"/>
</dbReference>
<dbReference type="InterPro" id="IPR002937">
    <property type="entry name" value="Amino_oxidase"/>
</dbReference>
<dbReference type="InterPro" id="IPR036188">
    <property type="entry name" value="FAD/NAD-bd_sf"/>
</dbReference>
<dbReference type="InterPro" id="IPR050281">
    <property type="entry name" value="Flavin_monoamine_oxidase"/>
</dbReference>
<dbReference type="PANTHER" id="PTHR10742:SF355">
    <property type="entry name" value="AMINE OXIDASE"/>
    <property type="match status" value="1"/>
</dbReference>
<dbReference type="PANTHER" id="PTHR10742">
    <property type="entry name" value="FLAVIN MONOAMINE OXIDASE"/>
    <property type="match status" value="1"/>
</dbReference>
<dbReference type="Pfam" id="PF01593">
    <property type="entry name" value="Amino_oxidase"/>
    <property type="match status" value="1"/>
</dbReference>
<dbReference type="SUPFAM" id="SSF54373">
    <property type="entry name" value="FAD-linked reductases, C-terminal domain"/>
    <property type="match status" value="1"/>
</dbReference>
<dbReference type="SUPFAM" id="SSF51905">
    <property type="entry name" value="FAD/NAD(P)-binding domain"/>
    <property type="match status" value="1"/>
</dbReference>
<accession>Q6WP39</accession>
<accession>Q7T062</accession>
<protein>
    <recommendedName>
        <fullName>L-amino-acid oxidase</fullName>
        <shortName>LAAO</shortName>
        <shortName evidence="6">TSV-LAO</shortName>
        <ecNumber evidence="3">1.4.3.2</ecNumber>
    </recommendedName>
</protein>
<evidence type="ECO:0000250" key="1"/>
<evidence type="ECO:0000250" key="2">
    <source>
        <dbReference type="UniProtKB" id="P0CC17"/>
    </source>
</evidence>
<evidence type="ECO:0000250" key="3">
    <source>
        <dbReference type="UniProtKB" id="P81382"/>
    </source>
</evidence>
<evidence type="ECO:0000255" key="4"/>
<evidence type="ECO:0000269" key="5">
    <source>
    </source>
</evidence>
<evidence type="ECO:0000303" key="6">
    <source>
    </source>
</evidence>
<evidence type="ECO:0000305" key="7"/>
<evidence type="ECO:0000305" key="8">
    <source>
    </source>
</evidence>
<organism>
    <name type="scientific">Trimeresurus stejnegeri</name>
    <name type="common">Chinese green tree viper</name>
    <name type="synonym">Viridovipera stejnegeri</name>
    <dbReference type="NCBI Taxonomy" id="39682"/>
    <lineage>
        <taxon>Eukaryota</taxon>
        <taxon>Metazoa</taxon>
        <taxon>Chordata</taxon>
        <taxon>Craniata</taxon>
        <taxon>Vertebrata</taxon>
        <taxon>Euteleostomi</taxon>
        <taxon>Lepidosauria</taxon>
        <taxon>Squamata</taxon>
        <taxon>Bifurcata</taxon>
        <taxon>Unidentata</taxon>
        <taxon>Episquamata</taxon>
        <taxon>Toxicofera</taxon>
        <taxon>Serpentes</taxon>
        <taxon>Colubroidea</taxon>
        <taxon>Viperidae</taxon>
        <taxon>Crotalinae</taxon>
        <taxon>Trimeresurus</taxon>
    </lineage>
</organism>
<comment type="function">
    <text evidence="2 5">Catalyzes an oxidative deamination of predominantly hydrophobic and aromatic L-amino acids, thus producing hydrogen peroxide that may contribute to the diverse toxic effects of this enzyme. Exhibits diverse biological activities, such as hemorrhage, hemolysis, edema, apoptosis of vascular endothelial cells or tumor cell lines, antibacterial and antiparasitic activities, as well as regulation of platelet aggregation. Effects of snake L-amino oxidases on platelets are controversial, since they either induce aggregation or inhibit agonist-induced aggregation. These different effects are probably due to different experimental conditions (By similarity). Displays dose-dependent inhibition on HIV-1 infection and replication (PubMed:12963032).</text>
</comment>
<comment type="catalytic activity">
    <reaction evidence="3">
        <text>an L-alpha-amino acid + O2 + H2O = a 2-oxocarboxylate + H2O2 + NH4(+)</text>
        <dbReference type="Rhea" id="RHEA:13781"/>
        <dbReference type="ChEBI" id="CHEBI:15377"/>
        <dbReference type="ChEBI" id="CHEBI:15379"/>
        <dbReference type="ChEBI" id="CHEBI:16240"/>
        <dbReference type="ChEBI" id="CHEBI:28938"/>
        <dbReference type="ChEBI" id="CHEBI:35179"/>
        <dbReference type="ChEBI" id="CHEBI:59869"/>
        <dbReference type="EC" id="1.4.3.2"/>
    </reaction>
</comment>
<comment type="cofactor">
    <cofactor evidence="3">
        <name>FAD</name>
        <dbReference type="ChEBI" id="CHEBI:57692"/>
    </cofactor>
</comment>
<comment type="subunit">
    <text evidence="5">Homodimer; non-covalently linked.</text>
</comment>
<comment type="subcellular location">
    <subcellularLocation>
        <location evidence="5">Secreted</location>
    </subcellularLocation>
</comment>
<comment type="tissue specificity">
    <text evidence="8">Expressed by the venom gland.</text>
</comment>
<comment type="PTM">
    <text evidence="5">N-glycosylated.</text>
</comment>
<comment type="similarity">
    <text evidence="7">Belongs to the flavin monoamine oxidase family. FIG1 subfamily.</text>
</comment>
<name>OXLA_TRIST</name>
<sequence length="516" mass="58601">MNVFFMFSLLFLAALGSCADDRNPLEECFRETDYEEFLEIARNGLKATSNPKHVVIVGAGMSGLSAAYVLAGAGHEVTVLEASERAGGRVRTYRNDEEGWYANLGPMRLPEKHRIVREYIRKFNLQLNEFSQENDNAWHFVKNIRKTVGEVKKDPGVLKYPVKPSEEGKSAEQLYEESLRKVEKELKRTNCSYILNKYDTYSTKEYLIKEGNLSPGAVDMIGDLMNEDAGYYVSFIESMKHDDIFAYEKRFDEIVDGMDKLPTSMYRAIEEKVHFNAQVIKIQKNAEEVTVTYHTPEKDTSFVTADYVIVCTTSRAARRIKFEPPLPLKKAHALRSVHYRSGTKIFLTCTKKFREDEGIHGGKSTTDLPSRFIYYPNHNFTSGVGVIIAYGIGDDANFFQALDLKDCGDIVINDLSLIHQLPREEIQTFCYPSMIQKWSLDKYAMGGITTFTPYQFQHFSEALTSHVDRIYFAGEYTAHAHGWIDSSIKSGLTAARDVNRASENPSGIHLSNDDEL</sequence>
<feature type="signal peptide" evidence="4">
    <location>
        <begin position="1"/>
        <end position="18"/>
    </location>
</feature>
<feature type="chain" id="PRO_0000273572" description="L-amino-acid oxidase">
    <location>
        <begin position="19"/>
        <end position="516"/>
    </location>
</feature>
<feature type="binding site" evidence="3">
    <location>
        <begin position="61"/>
        <end position="62"/>
    </location>
    <ligand>
        <name>FAD</name>
        <dbReference type="ChEBI" id="CHEBI:57692"/>
    </ligand>
</feature>
<feature type="binding site" evidence="3">
    <location>
        <begin position="81"/>
        <end position="82"/>
    </location>
    <ligand>
        <name>FAD</name>
        <dbReference type="ChEBI" id="CHEBI:57692"/>
    </ligand>
</feature>
<feature type="binding site" evidence="3">
    <location>
        <position position="89"/>
    </location>
    <ligand>
        <name>FAD</name>
        <dbReference type="ChEBI" id="CHEBI:57692"/>
    </ligand>
</feature>
<feature type="binding site" evidence="3">
    <location>
        <begin position="105"/>
        <end position="108"/>
    </location>
    <ligand>
        <name>FAD</name>
        <dbReference type="ChEBI" id="CHEBI:57692"/>
    </ligand>
</feature>
<feature type="binding site" evidence="3">
    <location>
        <position position="108"/>
    </location>
    <ligand>
        <name>substrate</name>
    </ligand>
</feature>
<feature type="binding site" evidence="3">
    <location>
        <position position="241"/>
    </location>
    <ligand>
        <name>substrate</name>
    </ligand>
</feature>
<feature type="binding site" evidence="3">
    <location>
        <position position="279"/>
    </location>
    <ligand>
        <name>FAD</name>
        <dbReference type="ChEBI" id="CHEBI:57692"/>
    </ligand>
</feature>
<feature type="binding site" evidence="3">
    <location>
        <position position="390"/>
    </location>
    <ligand>
        <name>substrate</name>
    </ligand>
</feature>
<feature type="binding site" evidence="1">
    <location>
        <position position="475"/>
    </location>
    <ligand>
        <name>FAD</name>
        <dbReference type="ChEBI" id="CHEBI:57692"/>
    </ligand>
</feature>
<feature type="binding site" evidence="3">
    <location>
        <begin position="481"/>
        <end position="486"/>
    </location>
    <ligand>
        <name>FAD</name>
        <dbReference type="ChEBI" id="CHEBI:57692"/>
    </ligand>
</feature>
<feature type="binding site" evidence="3">
    <location>
        <begin position="481"/>
        <end position="482"/>
    </location>
    <ligand>
        <name>substrate</name>
    </ligand>
</feature>
<feature type="binding site" evidence="1">
    <location>
        <begin position="482"/>
        <end position="487"/>
    </location>
    <ligand>
        <name>FAD</name>
        <dbReference type="ChEBI" id="CHEBI:57692"/>
    </ligand>
</feature>
<feature type="binding site" evidence="1">
    <location>
        <begin position="482"/>
        <end position="483"/>
    </location>
    <ligand>
        <name>substrate</name>
    </ligand>
</feature>
<feature type="glycosylation site" description="N-linked (GlcNAc...) asparagine" evidence="4">
    <location>
        <position position="190"/>
    </location>
</feature>
<feature type="glycosylation site" description="N-linked (GlcNAc...) asparagine" evidence="4">
    <location>
        <position position="379"/>
    </location>
</feature>
<feature type="disulfide bond" evidence="3">
    <location>
        <begin position="28"/>
        <end position="191"/>
    </location>
</feature>
<feature type="disulfide bond" evidence="3">
    <location>
        <begin position="349"/>
        <end position="430"/>
    </location>
</feature>
<feature type="sequence conflict" description="In Ref. 2; AAQ16182." evidence="7" ref="2">
    <original>G</original>
    <variation>E</variation>
    <location>
        <position position="16"/>
    </location>
</feature>
<feature type="sequence conflict" description="In Ref. 2; AAQ16182." evidence="7" ref="2">
    <original>H</original>
    <variation>R</variation>
    <location>
        <position position="53"/>
    </location>
</feature>
<feature type="sequence conflict" description="In Ref. 2; AAQ16182." evidence="7" ref="2">
    <original>A</original>
    <variation>T</variation>
    <location>
        <position position="73"/>
    </location>
</feature>
<feature type="sequence conflict" description="In Ref. 2; AAQ16182." evidence="7" ref="2">
    <original>K</original>
    <variation>E</variation>
    <location>
        <position position="181"/>
    </location>
</feature>
<feature type="sequence conflict" description="In Ref. 2; AAQ16182." evidence="7" ref="2">
    <original>H</original>
    <variation>Q</variation>
    <location>
        <position position="294"/>
    </location>
</feature>
<feature type="sequence conflict" description="In Ref. 2; AAQ16182." evidence="7" ref="2">
    <original>R</original>
    <variation>G</variation>
    <location>
        <position position="315"/>
    </location>
</feature>
<feature type="sequence conflict" description="In Ref. 2; AAQ16182." evidence="7" ref="2">
    <original>R</original>
    <variation>W</variation>
    <location>
        <position position="354"/>
    </location>
</feature>
<feature type="sequence conflict" description="In Ref. 2; AAQ16182." evidence="7" ref="2">
    <original>D</original>
    <variation>N</variation>
    <location>
        <position position="514"/>
    </location>
</feature>
<keyword id="KW-0044">Antibiotic</keyword>
<keyword id="KW-0929">Antimicrobial</keyword>
<keyword id="KW-0053">Apoptosis</keyword>
<keyword id="KW-0204">Cytolysis</keyword>
<keyword id="KW-1015">Disulfide bond</keyword>
<keyword id="KW-0274">FAD</keyword>
<keyword id="KW-0285">Flavoprotein</keyword>
<keyword id="KW-0325">Glycoprotein</keyword>
<keyword id="KW-0354">Hemolysis</keyword>
<keyword id="KW-1199">Hemostasis impairing toxin</keyword>
<keyword id="KW-0560">Oxidoreductase</keyword>
<keyword id="KW-0964">Secreted</keyword>
<keyword id="KW-0732">Signal</keyword>
<keyword id="KW-0800">Toxin</keyword>
<proteinExistence type="evidence at protein level"/>